<comment type="function">
    <text evidence="1">Involved in the modulation of the mitochondrial apoptotic pathway by ensuring the accumulation of cardiolipin (CL) in mitochondrial membranes. In vitro, the TRIAP1:PRELID1 complex mediates the transfer of phosphatidic acid (PA) between liposomes and probably functions as a PA transporter across the mitochondrion intermembrane space to provide PA for CL synthesis in the inner membrane. Regulates the mitochondrial apoptotic pathway in primary Th cells. Regulates Th cell differentiation by down-regulating STAT6 thereby reducing IL-4-induced Th2 cell number. May be important for the development of vital and immunocompetent organs (By similarity).</text>
</comment>
<comment type="catalytic activity">
    <reaction evidence="1">
        <text>a 1,2-diacyl-sn-glycero-3-phosphate(in) = a 1,2-diacyl-sn-glycero-3-phosphate(out)</text>
        <dbReference type="Rhea" id="RHEA:36435"/>
        <dbReference type="ChEBI" id="CHEBI:58608"/>
    </reaction>
</comment>
<comment type="subunit">
    <text evidence="1">Forms a complex with TRIAP1 in the mitochondrion intermembrane space. Interacts with OPA1 and AIFM1 (By similarity).</text>
</comment>
<comment type="subcellular location">
    <subcellularLocation>
        <location evidence="1">Mitochondrion</location>
    </subcellularLocation>
    <subcellularLocation>
        <location evidence="1">Mitochondrion intermembrane space</location>
    </subcellularLocation>
</comment>
<sequence length="219" mass="25248">MVKYFLGQSVLRSSWDQVFAAFWQRYPNPYSKHVLTEDIVHREVTSDQKLLSRRLLTKTNRMPRWAERLFPANVAHSVYILEDSIVDPQNQTMTTFTWNINHARLMVVEERCVYRVNSDNSGWTEIRREAWVSSSLFGVSRAVQEFGLARFKSNVTKTMKGFEYILAKLQGEAPPKTLVETAKEAKEKAKETALAATEKAKDLASKAATKKQQQQQQFV</sequence>
<evidence type="ECO:0000250" key="1">
    <source>
        <dbReference type="UniProtKB" id="Q9Y255"/>
    </source>
</evidence>
<evidence type="ECO:0000255" key="2">
    <source>
        <dbReference type="PROSITE-ProRule" id="PRU00158"/>
    </source>
</evidence>
<reference key="1">
    <citation type="submission" date="2005-11" db="EMBL/GenBank/DDBJ databases">
        <authorList>
            <consortium name="NIH - Mammalian Gene Collection (MGC) project"/>
        </authorList>
    </citation>
    <scope>NUCLEOTIDE SEQUENCE [LARGE SCALE MRNA]</scope>
    <source>
        <strain>Crossbred X Angus</strain>
        <tissue>Liver</tissue>
    </source>
</reference>
<protein>
    <recommendedName>
        <fullName>PRELI domain-containing protein 1, mitochondrial</fullName>
    </recommendedName>
</protein>
<proteinExistence type="evidence at transcript level"/>
<feature type="transit peptide" description="Mitochondrion" evidence="1">
    <location>
        <begin position="1"/>
        <end status="unknown"/>
    </location>
</feature>
<feature type="chain" id="PRO_0000288433" description="PRELI domain-containing protein 1, mitochondrial">
    <location>
        <begin status="unknown"/>
        <end position="219"/>
    </location>
</feature>
<feature type="domain" description="PRELI/MSF1" evidence="2">
    <location>
        <begin position="36"/>
        <end position="174"/>
    </location>
</feature>
<name>PRLD1_BOVIN</name>
<accession>Q32KN9</accession>
<gene>
    <name type="primary">PRELID1</name>
</gene>
<keyword id="KW-0053">Apoptosis</keyword>
<keyword id="KW-0445">Lipid transport</keyword>
<keyword id="KW-0496">Mitochondrion</keyword>
<keyword id="KW-1185">Reference proteome</keyword>
<keyword id="KW-0809">Transit peptide</keyword>
<keyword id="KW-0813">Transport</keyword>
<dbReference type="EMBL" id="BC110001">
    <property type="protein sequence ID" value="AAI10002.1"/>
    <property type="molecule type" value="mRNA"/>
</dbReference>
<dbReference type="RefSeq" id="NP_001033227.1">
    <property type="nucleotide sequence ID" value="NM_001038138.2"/>
</dbReference>
<dbReference type="SMR" id="Q32KN9"/>
<dbReference type="FunCoup" id="Q32KN9">
    <property type="interactions" value="2564"/>
</dbReference>
<dbReference type="STRING" id="9913.ENSBTAP00000006594"/>
<dbReference type="PaxDb" id="9913-ENSBTAP00000006594"/>
<dbReference type="GeneID" id="523609"/>
<dbReference type="KEGG" id="bta:523609"/>
<dbReference type="CTD" id="27166"/>
<dbReference type="VEuPathDB" id="HostDB:ENSBTAG00000005009"/>
<dbReference type="eggNOG" id="KOG3337">
    <property type="taxonomic scope" value="Eukaryota"/>
</dbReference>
<dbReference type="HOGENOM" id="CLU_067902_3_0_1"/>
<dbReference type="InParanoid" id="Q32KN9"/>
<dbReference type="OMA" id="GYEFFKC"/>
<dbReference type="OrthoDB" id="341300at2759"/>
<dbReference type="TreeFam" id="TF313119"/>
<dbReference type="Reactome" id="R-BTA-6803204">
    <property type="pathway name" value="TP53 Regulates Transcription of Genes Involved in Cytochrome C Release"/>
</dbReference>
<dbReference type="Proteomes" id="UP000009136">
    <property type="component" value="Chromosome 7"/>
</dbReference>
<dbReference type="Bgee" id="ENSBTAG00000005009">
    <property type="expression patterns" value="Expressed in ileocecal valve and 105 other cell types or tissues"/>
</dbReference>
<dbReference type="GO" id="GO:0005758">
    <property type="term" value="C:mitochondrial intermembrane space"/>
    <property type="evidence" value="ECO:0000250"/>
    <property type="project" value="UniProtKB"/>
</dbReference>
<dbReference type="GO" id="GO:0032991">
    <property type="term" value="C:protein-containing complex"/>
    <property type="evidence" value="ECO:0000250"/>
    <property type="project" value="UniProtKB"/>
</dbReference>
<dbReference type="GO" id="GO:1990050">
    <property type="term" value="F:phosphatidic acid transfer activity"/>
    <property type="evidence" value="ECO:0000318"/>
    <property type="project" value="GO_Central"/>
</dbReference>
<dbReference type="GO" id="GO:0006915">
    <property type="term" value="P:apoptotic process"/>
    <property type="evidence" value="ECO:0007669"/>
    <property type="project" value="UniProtKB-KW"/>
</dbReference>
<dbReference type="GO" id="GO:0043066">
    <property type="term" value="P:negative regulation of apoptotic process"/>
    <property type="evidence" value="ECO:0000250"/>
    <property type="project" value="UniProtKB"/>
</dbReference>
<dbReference type="GO" id="GO:0010917">
    <property type="term" value="P:negative regulation of mitochondrial membrane potential"/>
    <property type="evidence" value="ECO:0000250"/>
    <property type="project" value="UniProtKB"/>
</dbReference>
<dbReference type="GO" id="GO:0090201">
    <property type="term" value="P:negative regulation of release of cytochrome c from mitochondria"/>
    <property type="evidence" value="ECO:0000250"/>
    <property type="project" value="UniProtKB"/>
</dbReference>
<dbReference type="GO" id="GO:0015914">
    <property type="term" value="P:phospholipid transport"/>
    <property type="evidence" value="ECO:0000318"/>
    <property type="project" value="GO_Central"/>
</dbReference>
<dbReference type="GO" id="GO:1901857">
    <property type="term" value="P:positive regulation of cellular respiration"/>
    <property type="evidence" value="ECO:0000250"/>
    <property type="project" value="UniProtKB"/>
</dbReference>
<dbReference type="GO" id="GO:0010950">
    <property type="term" value="P:positive regulation of endopeptidase activity"/>
    <property type="evidence" value="ECO:0000250"/>
    <property type="project" value="UniProtKB"/>
</dbReference>
<dbReference type="GO" id="GO:2001140">
    <property type="term" value="P:positive regulation of phospholipid transport"/>
    <property type="evidence" value="ECO:0000250"/>
    <property type="project" value="UniProtKB"/>
</dbReference>
<dbReference type="GO" id="GO:0070234">
    <property type="term" value="P:positive regulation of T cell apoptotic process"/>
    <property type="evidence" value="ECO:0000250"/>
    <property type="project" value="UniProtKB"/>
</dbReference>
<dbReference type="GO" id="GO:0097035">
    <property type="term" value="P:regulation of membrane lipid distribution"/>
    <property type="evidence" value="ECO:0000250"/>
    <property type="project" value="UniProtKB"/>
</dbReference>
<dbReference type="GO" id="GO:0051881">
    <property type="term" value="P:regulation of mitochondrial membrane potential"/>
    <property type="evidence" value="ECO:0000250"/>
    <property type="project" value="UniProtKB"/>
</dbReference>
<dbReference type="GO" id="GO:0045580">
    <property type="term" value="P:regulation of T cell differentiation"/>
    <property type="evidence" value="ECO:0000250"/>
    <property type="project" value="UniProtKB"/>
</dbReference>
<dbReference type="InterPro" id="IPR006797">
    <property type="entry name" value="PRELI/MSF1_dom"/>
</dbReference>
<dbReference type="InterPro" id="IPR037365">
    <property type="entry name" value="Slowmo/Ups"/>
</dbReference>
<dbReference type="PANTHER" id="PTHR11158">
    <property type="entry name" value="MSF1/PX19 RELATED"/>
    <property type="match status" value="1"/>
</dbReference>
<dbReference type="Pfam" id="PF04707">
    <property type="entry name" value="PRELI"/>
    <property type="match status" value="1"/>
</dbReference>
<dbReference type="PROSITE" id="PS50904">
    <property type="entry name" value="PRELI_MSF1"/>
    <property type="match status" value="1"/>
</dbReference>
<organism>
    <name type="scientific">Bos taurus</name>
    <name type="common">Bovine</name>
    <dbReference type="NCBI Taxonomy" id="9913"/>
    <lineage>
        <taxon>Eukaryota</taxon>
        <taxon>Metazoa</taxon>
        <taxon>Chordata</taxon>
        <taxon>Craniata</taxon>
        <taxon>Vertebrata</taxon>
        <taxon>Euteleostomi</taxon>
        <taxon>Mammalia</taxon>
        <taxon>Eutheria</taxon>
        <taxon>Laurasiatheria</taxon>
        <taxon>Artiodactyla</taxon>
        <taxon>Ruminantia</taxon>
        <taxon>Pecora</taxon>
        <taxon>Bovidae</taxon>
        <taxon>Bovinae</taxon>
        <taxon>Bos</taxon>
    </lineage>
</organism>